<comment type="function">
    <text evidence="1">Can catalyze the hydrolysis of ATP in the presence of single-stranded DNA, the ATP-dependent uptake of single-stranded DNA by duplex DNA, and the ATP-dependent hybridization of homologous single-stranded DNAs. It interacts with LexA causing its activation and leading to its autocatalytic cleavage.</text>
</comment>
<comment type="subcellular location">
    <subcellularLocation>
        <location evidence="1">Cytoplasm</location>
    </subcellularLocation>
</comment>
<comment type="similarity">
    <text evidence="1">Belongs to the RecA family.</text>
</comment>
<evidence type="ECO:0000255" key="1">
    <source>
        <dbReference type="HAMAP-Rule" id="MF_00268"/>
    </source>
</evidence>
<feature type="chain" id="PRO_1000193284" description="Protein RecA">
    <location>
        <begin position="1"/>
        <end position="361"/>
    </location>
</feature>
<feature type="binding site" evidence="1">
    <location>
        <begin position="77"/>
        <end position="84"/>
    </location>
    <ligand>
        <name>ATP</name>
        <dbReference type="ChEBI" id="CHEBI:30616"/>
    </ligand>
</feature>
<sequence length="361" mass="38751">MSQNSLRLVEDKSVDKSKALEAALSQIERSFGKGSIMKLGSNENVVEIETVSTGSLSLDIALGIGGLPKGRIVEIYGPESSGKTTLALQTIAEAQKKGGICAFVDAEHALDPVYARKLGVDLQNLLISQPDTGEQALEITDTLVRSGAIDVLVVDSVAALTPRAEIEGEMGDSLPGLQARLMSQALRKLTASISKSNTMVIFINQIRMKIGVMFGSPETTTGGNALKFYASVRLDIRRIGAVKEREEVVGNQTRVKVVKNKMAPPFKQVEFDIMYGEGVSKTGELVDLGVKAGIVEKSGAWFSYNSQRLGQGRENAKLFLRDNPDLAREIELSLRQNAGLIADRFLQNGGPDADDGEAAAE</sequence>
<protein>
    <recommendedName>
        <fullName evidence="1">Protein RecA</fullName>
    </recommendedName>
    <alternativeName>
        <fullName evidence="1">Recombinase A</fullName>
    </alternativeName>
</protein>
<dbReference type="EMBL" id="CP000628">
    <property type="protein sequence ID" value="ACM26767.1"/>
    <property type="molecule type" value="Genomic_DNA"/>
</dbReference>
<dbReference type="RefSeq" id="WP_012651593.1">
    <property type="nucleotide sequence ID" value="NC_011985.1"/>
</dbReference>
<dbReference type="SMR" id="B9JFS7"/>
<dbReference type="STRING" id="311403.Arad_2618"/>
<dbReference type="GeneID" id="86848626"/>
<dbReference type="KEGG" id="ara:Arad_2618"/>
<dbReference type="eggNOG" id="COG0468">
    <property type="taxonomic scope" value="Bacteria"/>
</dbReference>
<dbReference type="HOGENOM" id="CLU_040469_1_2_5"/>
<dbReference type="Proteomes" id="UP000001600">
    <property type="component" value="Chromosome 1"/>
</dbReference>
<dbReference type="GO" id="GO:0005829">
    <property type="term" value="C:cytosol"/>
    <property type="evidence" value="ECO:0007669"/>
    <property type="project" value="TreeGrafter"/>
</dbReference>
<dbReference type="GO" id="GO:0005524">
    <property type="term" value="F:ATP binding"/>
    <property type="evidence" value="ECO:0007669"/>
    <property type="project" value="UniProtKB-UniRule"/>
</dbReference>
<dbReference type="GO" id="GO:0016887">
    <property type="term" value="F:ATP hydrolysis activity"/>
    <property type="evidence" value="ECO:0007669"/>
    <property type="project" value="InterPro"/>
</dbReference>
<dbReference type="GO" id="GO:0140664">
    <property type="term" value="F:ATP-dependent DNA damage sensor activity"/>
    <property type="evidence" value="ECO:0007669"/>
    <property type="project" value="InterPro"/>
</dbReference>
<dbReference type="GO" id="GO:0003684">
    <property type="term" value="F:damaged DNA binding"/>
    <property type="evidence" value="ECO:0007669"/>
    <property type="project" value="UniProtKB-UniRule"/>
</dbReference>
<dbReference type="GO" id="GO:0003697">
    <property type="term" value="F:single-stranded DNA binding"/>
    <property type="evidence" value="ECO:0007669"/>
    <property type="project" value="UniProtKB-UniRule"/>
</dbReference>
<dbReference type="GO" id="GO:0006310">
    <property type="term" value="P:DNA recombination"/>
    <property type="evidence" value="ECO:0007669"/>
    <property type="project" value="UniProtKB-UniRule"/>
</dbReference>
<dbReference type="GO" id="GO:0006281">
    <property type="term" value="P:DNA repair"/>
    <property type="evidence" value="ECO:0007669"/>
    <property type="project" value="UniProtKB-UniRule"/>
</dbReference>
<dbReference type="GO" id="GO:0009432">
    <property type="term" value="P:SOS response"/>
    <property type="evidence" value="ECO:0007669"/>
    <property type="project" value="UniProtKB-UniRule"/>
</dbReference>
<dbReference type="CDD" id="cd00983">
    <property type="entry name" value="RecA"/>
    <property type="match status" value="1"/>
</dbReference>
<dbReference type="FunFam" id="3.40.50.300:FF:000087">
    <property type="entry name" value="Recombinase RecA"/>
    <property type="match status" value="1"/>
</dbReference>
<dbReference type="Gene3D" id="3.40.50.300">
    <property type="entry name" value="P-loop containing nucleotide triphosphate hydrolases"/>
    <property type="match status" value="1"/>
</dbReference>
<dbReference type="HAMAP" id="MF_00268">
    <property type="entry name" value="RecA"/>
    <property type="match status" value="1"/>
</dbReference>
<dbReference type="InterPro" id="IPR003593">
    <property type="entry name" value="AAA+_ATPase"/>
</dbReference>
<dbReference type="InterPro" id="IPR013765">
    <property type="entry name" value="DNA_recomb/repair_RecA"/>
</dbReference>
<dbReference type="InterPro" id="IPR020584">
    <property type="entry name" value="DNA_recomb/repair_RecA_CS"/>
</dbReference>
<dbReference type="InterPro" id="IPR027417">
    <property type="entry name" value="P-loop_NTPase"/>
</dbReference>
<dbReference type="InterPro" id="IPR049261">
    <property type="entry name" value="RecA-like_C"/>
</dbReference>
<dbReference type="InterPro" id="IPR049428">
    <property type="entry name" value="RecA-like_N"/>
</dbReference>
<dbReference type="InterPro" id="IPR020588">
    <property type="entry name" value="RecA_ATP-bd"/>
</dbReference>
<dbReference type="InterPro" id="IPR023400">
    <property type="entry name" value="RecA_C_sf"/>
</dbReference>
<dbReference type="InterPro" id="IPR020587">
    <property type="entry name" value="RecA_monomer-monomer_interface"/>
</dbReference>
<dbReference type="NCBIfam" id="TIGR02012">
    <property type="entry name" value="tigrfam_recA"/>
    <property type="match status" value="1"/>
</dbReference>
<dbReference type="PANTHER" id="PTHR45900:SF1">
    <property type="entry name" value="MITOCHONDRIAL DNA REPAIR PROTEIN RECA HOMOLOG-RELATED"/>
    <property type="match status" value="1"/>
</dbReference>
<dbReference type="PANTHER" id="PTHR45900">
    <property type="entry name" value="RECA"/>
    <property type="match status" value="1"/>
</dbReference>
<dbReference type="Pfam" id="PF00154">
    <property type="entry name" value="RecA"/>
    <property type="match status" value="1"/>
</dbReference>
<dbReference type="Pfam" id="PF21096">
    <property type="entry name" value="RecA_C"/>
    <property type="match status" value="1"/>
</dbReference>
<dbReference type="PRINTS" id="PR00142">
    <property type="entry name" value="RECA"/>
</dbReference>
<dbReference type="SMART" id="SM00382">
    <property type="entry name" value="AAA"/>
    <property type="match status" value="1"/>
</dbReference>
<dbReference type="SUPFAM" id="SSF52540">
    <property type="entry name" value="P-loop containing nucleoside triphosphate hydrolases"/>
    <property type="match status" value="1"/>
</dbReference>
<dbReference type="SUPFAM" id="SSF54752">
    <property type="entry name" value="RecA protein, C-terminal domain"/>
    <property type="match status" value="1"/>
</dbReference>
<dbReference type="PROSITE" id="PS00321">
    <property type="entry name" value="RECA_1"/>
    <property type="match status" value="1"/>
</dbReference>
<dbReference type="PROSITE" id="PS50162">
    <property type="entry name" value="RECA_2"/>
    <property type="match status" value="1"/>
</dbReference>
<dbReference type="PROSITE" id="PS50163">
    <property type="entry name" value="RECA_3"/>
    <property type="match status" value="1"/>
</dbReference>
<reference key="1">
    <citation type="journal article" date="2009" name="J. Bacteriol.">
        <title>Genome sequences of three Agrobacterium biovars help elucidate the evolution of multichromosome genomes in bacteria.</title>
        <authorList>
            <person name="Slater S.C."/>
            <person name="Goldman B.S."/>
            <person name="Goodner B."/>
            <person name="Setubal J.C."/>
            <person name="Farrand S.K."/>
            <person name="Nester E.W."/>
            <person name="Burr T.J."/>
            <person name="Banta L."/>
            <person name="Dickerman A.W."/>
            <person name="Paulsen I."/>
            <person name="Otten L."/>
            <person name="Suen G."/>
            <person name="Welch R."/>
            <person name="Almeida N.F."/>
            <person name="Arnold F."/>
            <person name="Burton O.T."/>
            <person name="Du Z."/>
            <person name="Ewing A."/>
            <person name="Godsy E."/>
            <person name="Heisel S."/>
            <person name="Houmiel K.L."/>
            <person name="Jhaveri J."/>
            <person name="Lu J."/>
            <person name="Miller N.M."/>
            <person name="Norton S."/>
            <person name="Chen Q."/>
            <person name="Phoolcharoen W."/>
            <person name="Ohlin V."/>
            <person name="Ondrusek D."/>
            <person name="Pride N."/>
            <person name="Stricklin S.L."/>
            <person name="Sun J."/>
            <person name="Wheeler C."/>
            <person name="Wilson L."/>
            <person name="Zhu H."/>
            <person name="Wood D.W."/>
        </authorList>
    </citation>
    <scope>NUCLEOTIDE SEQUENCE [LARGE SCALE GENOMIC DNA]</scope>
    <source>
        <strain>K84 / ATCC BAA-868</strain>
    </source>
</reference>
<gene>
    <name evidence="1" type="primary">recA</name>
    <name type="ordered locus">Arad_2618</name>
</gene>
<organism>
    <name type="scientific">Rhizobium rhizogenes (strain K84 / ATCC BAA-868)</name>
    <name type="common">Agrobacterium radiobacter</name>
    <dbReference type="NCBI Taxonomy" id="311403"/>
    <lineage>
        <taxon>Bacteria</taxon>
        <taxon>Pseudomonadati</taxon>
        <taxon>Pseudomonadota</taxon>
        <taxon>Alphaproteobacteria</taxon>
        <taxon>Hyphomicrobiales</taxon>
        <taxon>Rhizobiaceae</taxon>
        <taxon>Rhizobium/Agrobacterium group</taxon>
        <taxon>Rhizobium</taxon>
    </lineage>
</organism>
<name>RECA_RHIR8</name>
<proteinExistence type="inferred from homology"/>
<accession>B9JFS7</accession>
<keyword id="KW-0067">ATP-binding</keyword>
<keyword id="KW-0963">Cytoplasm</keyword>
<keyword id="KW-0227">DNA damage</keyword>
<keyword id="KW-0233">DNA recombination</keyword>
<keyword id="KW-0234">DNA repair</keyword>
<keyword id="KW-0238">DNA-binding</keyword>
<keyword id="KW-0547">Nucleotide-binding</keyword>
<keyword id="KW-0742">SOS response</keyword>